<reference key="1">
    <citation type="journal article" date="1989" name="FEBS Lett.">
        <title>Cloning, sequence analysis and chromosome localization of a Drosophila muscarinic acetylcholine receptor.</title>
        <authorList>
            <person name="Onai T."/>
            <person name="Fitzgerald M.G."/>
            <person name="Arakawa S."/>
            <person name="Gocayne J.D."/>
            <person name="Urquhart D.A."/>
            <person name="Hall L.M."/>
            <person name="Fraser C.M."/>
            <person name="McCombie W.R."/>
            <person name="Venter J.C."/>
        </authorList>
    </citation>
    <scope>NUCLEOTIDE SEQUENCE [MRNA] (ISOFORM A)</scope>
</reference>
<reference key="2">
    <citation type="journal article" date="2013" name="Cell. Mol. Life Sci.">
        <title>Two types of muscarinic acetylcholine receptors in Drosophila and other arthropods.</title>
        <authorList>
            <person name="Collin C."/>
            <person name="Hauser F."/>
            <person name="de Valdivia E.G."/>
            <person name="Li S."/>
            <person name="Reisenberger J."/>
            <person name="Carlsen E.M."/>
            <person name="Khan Z."/>
            <person name="Hansen N.O."/>
            <person name="Puhm F."/>
            <person name="Sondergaard L."/>
            <person name="Niemiec J."/>
            <person name="Heninger M."/>
            <person name="Ren G.R."/>
            <person name="Grimmelikhuijzen C.J."/>
        </authorList>
    </citation>
    <scope>NUCLEOTIDE SEQUENCE [MRNA] (ISOFORMS A AND B)</scope>
</reference>
<reference key="3">
    <citation type="journal article" date="2000" name="Science">
        <title>The genome sequence of Drosophila melanogaster.</title>
        <authorList>
            <person name="Adams M.D."/>
            <person name="Celniker S.E."/>
            <person name="Holt R.A."/>
            <person name="Evans C.A."/>
            <person name="Gocayne J.D."/>
            <person name="Amanatides P.G."/>
            <person name="Scherer S.E."/>
            <person name="Li P.W."/>
            <person name="Hoskins R.A."/>
            <person name="Galle R.F."/>
            <person name="George R.A."/>
            <person name="Lewis S.E."/>
            <person name="Richards S."/>
            <person name="Ashburner M."/>
            <person name="Henderson S.N."/>
            <person name="Sutton G.G."/>
            <person name="Wortman J.R."/>
            <person name="Yandell M.D."/>
            <person name="Zhang Q."/>
            <person name="Chen L.X."/>
            <person name="Brandon R.C."/>
            <person name="Rogers Y.-H.C."/>
            <person name="Blazej R.G."/>
            <person name="Champe M."/>
            <person name="Pfeiffer B.D."/>
            <person name="Wan K.H."/>
            <person name="Doyle C."/>
            <person name="Baxter E.G."/>
            <person name="Helt G."/>
            <person name="Nelson C.R."/>
            <person name="Miklos G.L.G."/>
            <person name="Abril J.F."/>
            <person name="Agbayani A."/>
            <person name="An H.-J."/>
            <person name="Andrews-Pfannkoch C."/>
            <person name="Baldwin D."/>
            <person name="Ballew R.M."/>
            <person name="Basu A."/>
            <person name="Baxendale J."/>
            <person name="Bayraktaroglu L."/>
            <person name="Beasley E.M."/>
            <person name="Beeson K.Y."/>
            <person name="Benos P.V."/>
            <person name="Berman B.P."/>
            <person name="Bhandari D."/>
            <person name="Bolshakov S."/>
            <person name="Borkova D."/>
            <person name="Botchan M.R."/>
            <person name="Bouck J."/>
            <person name="Brokstein P."/>
            <person name="Brottier P."/>
            <person name="Burtis K.C."/>
            <person name="Busam D.A."/>
            <person name="Butler H."/>
            <person name="Cadieu E."/>
            <person name="Center A."/>
            <person name="Chandra I."/>
            <person name="Cherry J.M."/>
            <person name="Cawley S."/>
            <person name="Dahlke C."/>
            <person name="Davenport L.B."/>
            <person name="Davies P."/>
            <person name="de Pablos B."/>
            <person name="Delcher A."/>
            <person name="Deng Z."/>
            <person name="Mays A.D."/>
            <person name="Dew I."/>
            <person name="Dietz S.M."/>
            <person name="Dodson K."/>
            <person name="Doup L.E."/>
            <person name="Downes M."/>
            <person name="Dugan-Rocha S."/>
            <person name="Dunkov B.C."/>
            <person name="Dunn P."/>
            <person name="Durbin K.J."/>
            <person name="Evangelista C.C."/>
            <person name="Ferraz C."/>
            <person name="Ferriera S."/>
            <person name="Fleischmann W."/>
            <person name="Fosler C."/>
            <person name="Gabrielian A.E."/>
            <person name="Garg N.S."/>
            <person name="Gelbart W.M."/>
            <person name="Glasser K."/>
            <person name="Glodek A."/>
            <person name="Gong F."/>
            <person name="Gorrell J.H."/>
            <person name="Gu Z."/>
            <person name="Guan P."/>
            <person name="Harris M."/>
            <person name="Harris N.L."/>
            <person name="Harvey D.A."/>
            <person name="Heiman T.J."/>
            <person name="Hernandez J.R."/>
            <person name="Houck J."/>
            <person name="Hostin D."/>
            <person name="Houston K.A."/>
            <person name="Howland T.J."/>
            <person name="Wei M.-H."/>
            <person name="Ibegwam C."/>
            <person name="Jalali M."/>
            <person name="Kalush F."/>
            <person name="Karpen G.H."/>
            <person name="Ke Z."/>
            <person name="Kennison J.A."/>
            <person name="Ketchum K.A."/>
            <person name="Kimmel B.E."/>
            <person name="Kodira C.D."/>
            <person name="Kraft C.L."/>
            <person name="Kravitz S."/>
            <person name="Kulp D."/>
            <person name="Lai Z."/>
            <person name="Lasko P."/>
            <person name="Lei Y."/>
            <person name="Levitsky A.A."/>
            <person name="Li J.H."/>
            <person name="Li Z."/>
            <person name="Liang Y."/>
            <person name="Lin X."/>
            <person name="Liu X."/>
            <person name="Mattei B."/>
            <person name="McIntosh T.C."/>
            <person name="McLeod M.P."/>
            <person name="McPherson D."/>
            <person name="Merkulov G."/>
            <person name="Milshina N.V."/>
            <person name="Mobarry C."/>
            <person name="Morris J."/>
            <person name="Moshrefi A."/>
            <person name="Mount S.M."/>
            <person name="Moy M."/>
            <person name="Murphy B."/>
            <person name="Murphy L."/>
            <person name="Muzny D.M."/>
            <person name="Nelson D.L."/>
            <person name="Nelson D.R."/>
            <person name="Nelson K.A."/>
            <person name="Nixon K."/>
            <person name="Nusskern D.R."/>
            <person name="Pacleb J.M."/>
            <person name="Palazzolo M."/>
            <person name="Pittman G.S."/>
            <person name="Pan S."/>
            <person name="Pollard J."/>
            <person name="Puri V."/>
            <person name="Reese M.G."/>
            <person name="Reinert K."/>
            <person name="Remington K."/>
            <person name="Saunders R.D.C."/>
            <person name="Scheeler F."/>
            <person name="Shen H."/>
            <person name="Shue B.C."/>
            <person name="Siden-Kiamos I."/>
            <person name="Simpson M."/>
            <person name="Skupski M.P."/>
            <person name="Smith T.J."/>
            <person name="Spier E."/>
            <person name="Spradling A.C."/>
            <person name="Stapleton M."/>
            <person name="Strong R."/>
            <person name="Sun E."/>
            <person name="Svirskas R."/>
            <person name="Tector C."/>
            <person name="Turner R."/>
            <person name="Venter E."/>
            <person name="Wang A.H."/>
            <person name="Wang X."/>
            <person name="Wang Z.-Y."/>
            <person name="Wassarman D.A."/>
            <person name="Weinstock G.M."/>
            <person name="Weissenbach J."/>
            <person name="Williams S.M."/>
            <person name="Woodage T."/>
            <person name="Worley K.C."/>
            <person name="Wu D."/>
            <person name="Yang S."/>
            <person name="Yao Q.A."/>
            <person name="Ye J."/>
            <person name="Yeh R.-F."/>
            <person name="Zaveri J.S."/>
            <person name="Zhan M."/>
            <person name="Zhang G."/>
            <person name="Zhao Q."/>
            <person name="Zheng L."/>
            <person name="Zheng X.H."/>
            <person name="Zhong F.N."/>
            <person name="Zhong W."/>
            <person name="Zhou X."/>
            <person name="Zhu S.C."/>
            <person name="Zhu X."/>
            <person name="Smith H.O."/>
            <person name="Gibbs R.A."/>
            <person name="Myers E.W."/>
            <person name="Rubin G.M."/>
            <person name="Venter J.C."/>
        </authorList>
    </citation>
    <scope>NUCLEOTIDE SEQUENCE [LARGE SCALE GENOMIC DNA]</scope>
    <source>
        <strain>Berkeley</strain>
    </source>
</reference>
<reference key="4">
    <citation type="journal article" date="2002" name="Genome Biol.">
        <title>Annotation of the Drosophila melanogaster euchromatic genome: a systematic review.</title>
        <authorList>
            <person name="Misra S."/>
            <person name="Crosby M.A."/>
            <person name="Mungall C.J."/>
            <person name="Matthews B.B."/>
            <person name="Campbell K.S."/>
            <person name="Hradecky P."/>
            <person name="Huang Y."/>
            <person name="Kaminker J.S."/>
            <person name="Millburn G.H."/>
            <person name="Prochnik S.E."/>
            <person name="Smith C.D."/>
            <person name="Tupy J.L."/>
            <person name="Whitfield E.J."/>
            <person name="Bayraktaroglu L."/>
            <person name="Berman B.P."/>
            <person name="Bettencourt B.R."/>
            <person name="Celniker S.E."/>
            <person name="de Grey A.D.N.J."/>
            <person name="Drysdale R.A."/>
            <person name="Harris N.L."/>
            <person name="Richter J."/>
            <person name="Russo S."/>
            <person name="Schroeder A.J."/>
            <person name="Shu S.Q."/>
            <person name="Stapleton M."/>
            <person name="Yamada C."/>
            <person name="Ashburner M."/>
            <person name="Gelbart W.M."/>
            <person name="Rubin G.M."/>
            <person name="Lewis S.E."/>
        </authorList>
    </citation>
    <scope>GENOME REANNOTATION</scope>
    <scope>ALTERNATIVE SPLICING</scope>
    <source>
        <strain>Berkeley</strain>
    </source>
</reference>
<reference key="5">
    <citation type="submission" date="2011-04" db="EMBL/GenBank/DDBJ databases">
        <authorList>
            <person name="Carlson J."/>
            <person name="Stapleton M."/>
            <person name="Booth B."/>
            <person name="Chavez C."/>
            <person name="Frise E."/>
            <person name="George R."/>
            <person name="Pacleb J."/>
            <person name="Park S."/>
            <person name="Wan K."/>
            <person name="Yu C."/>
            <person name="Celniker S."/>
        </authorList>
    </citation>
    <scope>NUCLEOTIDE SEQUENCE [LARGE SCALE MRNA] (ISOFORM B)</scope>
</reference>
<reference key="6">
    <citation type="journal article" date="1989" name="Proc. Natl. Acad. Sci. U.S.A.">
        <title>Characterization and functional expression in mammalian cells of genomic and cDNA clones encoding a Drosophila muscarinic acetylcholine receptor.</title>
        <authorList>
            <person name="Shapiro R.A."/>
            <person name="Wakimoto B.T."/>
            <person name="Subers E.M."/>
            <person name="Nathanson N.M."/>
        </authorList>
    </citation>
    <scope>NUCLEOTIDE SEQUENCE [MRNA] OF 45-805 (ISOFORM B)</scope>
    <scope>FUNCTION</scope>
    <source>
        <strain>Oregon-R</strain>
    </source>
</reference>
<reference key="7">
    <citation type="journal article" date="1995" name="J. Neuroendocrinol.">
        <title>Localization in the nervous system of Drosophila melanogaster of a C-terminus anti-peptide antibody to a cloned Drosophila muscarinic acetylcholine receptor.</title>
        <authorList>
            <person name="Harrison J.B."/>
            <person name="Chen H.H."/>
            <person name="Blake A.D."/>
            <person name="Huskisson N.S."/>
            <person name="Barker P."/>
            <person name="Sattelle D.B."/>
        </authorList>
    </citation>
    <scope>FUNCTION</scope>
    <scope>TISSUE SPECIFICITY</scope>
</reference>
<evidence type="ECO:0000250" key="1"/>
<evidence type="ECO:0000255" key="2"/>
<evidence type="ECO:0000255" key="3">
    <source>
        <dbReference type="PROSITE-ProRule" id="PRU00521"/>
    </source>
</evidence>
<evidence type="ECO:0000256" key="4">
    <source>
        <dbReference type="SAM" id="MobiDB-lite"/>
    </source>
</evidence>
<evidence type="ECO:0000269" key="5">
    <source>
    </source>
</evidence>
<evidence type="ECO:0000269" key="6">
    <source>
    </source>
</evidence>
<evidence type="ECO:0000303" key="7">
    <source>
    </source>
</evidence>
<evidence type="ECO:0000303" key="8">
    <source>
    </source>
</evidence>
<evidence type="ECO:0000305" key="9"/>
<name>ACM1_DROME</name>
<accession>P16395</accession>
<accession>G4LU59</accession>
<accession>M9NHK8</accession>
<accession>M9NKN3</accession>
<accession>Q1ECB8</accession>
<accession>Q8MLP2</accession>
<accession>Q9W180</accession>
<keyword id="KW-0025">Alternative splicing</keyword>
<keyword id="KW-1003">Cell membrane</keyword>
<keyword id="KW-0297">G-protein coupled receptor</keyword>
<keyword id="KW-0325">Glycoprotein</keyword>
<keyword id="KW-0472">Membrane</keyword>
<keyword id="KW-0597">Phosphoprotein</keyword>
<keyword id="KW-0628">Postsynaptic cell membrane</keyword>
<keyword id="KW-0675">Receptor</keyword>
<keyword id="KW-1185">Reference proteome</keyword>
<keyword id="KW-0770">Synapse</keyword>
<keyword id="KW-0807">Transducer</keyword>
<keyword id="KW-0812">Transmembrane</keyword>
<keyword id="KW-1133">Transmembrane helix</keyword>
<protein>
    <recommendedName>
        <fullName>Muscarinic acetylcholine receptor DM1</fullName>
    </recommendedName>
</protein>
<organism>
    <name type="scientific">Drosophila melanogaster</name>
    <name type="common">Fruit fly</name>
    <dbReference type="NCBI Taxonomy" id="7227"/>
    <lineage>
        <taxon>Eukaryota</taxon>
        <taxon>Metazoa</taxon>
        <taxon>Ecdysozoa</taxon>
        <taxon>Arthropoda</taxon>
        <taxon>Hexapoda</taxon>
        <taxon>Insecta</taxon>
        <taxon>Pterygota</taxon>
        <taxon>Neoptera</taxon>
        <taxon>Endopterygota</taxon>
        <taxon>Diptera</taxon>
        <taxon>Brachycera</taxon>
        <taxon>Muscomorpha</taxon>
        <taxon>Ephydroidea</taxon>
        <taxon>Drosophilidae</taxon>
        <taxon>Drosophila</taxon>
        <taxon>Sophophora</taxon>
    </lineage>
</organism>
<proteinExistence type="evidence at transcript level"/>
<comment type="function">
    <text evidence="5 6">The muscarinic acetylcholine receptor mediates various cellular responses, including inhibition of adenylate cyclase, breakdown of phosphoinositides and modulation of potassium channels through the action of G proteins. Primary transducing effect is Pi turnover. May have a role in the processing of olfactory and mechanosensory signals; regulation of neurosecretion.</text>
</comment>
<comment type="subcellular location">
    <subcellularLocation>
        <location>Cell membrane</location>
        <topology>Multi-pass membrane protein</topology>
    </subcellularLocation>
    <subcellularLocation>
        <location>Postsynaptic cell membrane</location>
        <topology>Multi-pass membrane protein</topology>
    </subcellularLocation>
</comment>
<comment type="alternative products">
    <event type="alternative splicing"/>
    <isoform>
        <id>P16395-1</id>
        <name>B</name>
        <sequence type="displayed"/>
    </isoform>
    <isoform>
        <id>P16395-2</id>
        <name>A</name>
        <sequence type="described" ref="VSP_012002"/>
    </isoform>
</comment>
<comment type="tissue specificity">
    <text evidence="6">Intense staining in the glomeruli of the antennal lobes, the region of the nervous system containing terminals of antennal olfactory sensory neurons and mechanosensory neurons. Also a discrete group of neurosecretory cells in the pars intercerebralis of the brain.</text>
</comment>
<comment type="similarity">
    <text evidence="3">Belongs to the G-protein coupled receptor 1 family. Muscarinic acetylcholine receptor subfamily.</text>
</comment>
<comment type="sequence caution" evidence="9">
    <conflict type="frameshift">
        <sequence resource="EMBL-CDS" id="AAA85449"/>
    </conflict>
</comment>
<comment type="sequence caution" evidence="9">
    <conflict type="miscellaneous discrepancy">
        <sequence resource="EMBL-CDS" id="ABF85716"/>
    </conflict>
    <text>Contaminating sequence. E.coli genomic contaminant.</text>
</comment>
<feature type="chain" id="PRO_0000069051" description="Muscarinic acetylcholine receptor DM1">
    <location>
        <begin position="1"/>
        <end position="805"/>
    </location>
</feature>
<feature type="topological domain" description="Extracellular" evidence="1">
    <location>
        <begin position="1"/>
        <end position="100"/>
    </location>
</feature>
<feature type="transmembrane region" description="Helical; Name=1" evidence="1">
    <location>
        <begin position="101"/>
        <end position="121"/>
    </location>
</feature>
<feature type="topological domain" description="Cytoplasmic" evidence="1">
    <location>
        <begin position="122"/>
        <end position="141"/>
    </location>
</feature>
<feature type="transmembrane region" description="Helical; Name=2" evidence="1">
    <location>
        <begin position="142"/>
        <end position="162"/>
    </location>
</feature>
<feature type="topological domain" description="Extracellular" evidence="1">
    <location>
        <begin position="163"/>
        <end position="177"/>
    </location>
</feature>
<feature type="transmembrane region" description="Helical; Name=3" evidence="1">
    <location>
        <begin position="178"/>
        <end position="198"/>
    </location>
</feature>
<feature type="topological domain" description="Cytoplasmic" evidence="1">
    <location>
        <begin position="199"/>
        <end position="220"/>
    </location>
</feature>
<feature type="transmembrane region" description="Helical; Name=4" evidence="1">
    <location>
        <begin position="221"/>
        <end position="241"/>
    </location>
</feature>
<feature type="topological domain" description="Extracellular" evidence="1">
    <location>
        <begin position="242"/>
        <end position="266"/>
    </location>
</feature>
<feature type="transmembrane region" description="Helical; Name=5" evidence="1">
    <location>
        <begin position="267"/>
        <end position="287"/>
    </location>
</feature>
<feature type="topological domain" description="Cytoplasmic" evidence="1">
    <location>
        <begin position="288"/>
        <end position="718"/>
    </location>
</feature>
<feature type="transmembrane region" description="Helical; Name=6" evidence="1">
    <location>
        <begin position="719"/>
        <end position="739"/>
    </location>
</feature>
<feature type="topological domain" description="Extracellular" evidence="1">
    <location>
        <begin position="740"/>
        <end position="752"/>
    </location>
</feature>
<feature type="transmembrane region" description="Helical; Name=7" evidence="1">
    <location>
        <begin position="753"/>
        <end position="773"/>
    </location>
</feature>
<feature type="topological domain" description="Cytoplasmic" evidence="1">
    <location>
        <begin position="774"/>
        <end position="805"/>
    </location>
</feature>
<feature type="region of interest" description="Disordered" evidence="4">
    <location>
        <begin position="27"/>
        <end position="47"/>
    </location>
</feature>
<feature type="region of interest" description="Disordered" evidence="4">
    <location>
        <begin position="302"/>
        <end position="322"/>
    </location>
</feature>
<feature type="region of interest" description="Disordered" evidence="4">
    <location>
        <begin position="340"/>
        <end position="359"/>
    </location>
</feature>
<feature type="region of interest" description="Disordered" evidence="4">
    <location>
        <begin position="507"/>
        <end position="530"/>
    </location>
</feature>
<feature type="compositionally biased region" description="Low complexity" evidence="4">
    <location>
        <begin position="27"/>
        <end position="43"/>
    </location>
</feature>
<feature type="compositionally biased region" description="Basic and acidic residues" evidence="4">
    <location>
        <begin position="308"/>
        <end position="318"/>
    </location>
</feature>
<feature type="compositionally biased region" description="Basic and acidic residues" evidence="4">
    <location>
        <begin position="341"/>
        <end position="353"/>
    </location>
</feature>
<feature type="compositionally biased region" description="Low complexity" evidence="4">
    <location>
        <begin position="507"/>
        <end position="525"/>
    </location>
</feature>
<feature type="glycosylation site" description="N-linked (GlcNAc...) asparagine" evidence="2">
    <location>
        <position position="65"/>
    </location>
</feature>
<feature type="glycosylation site" description="N-linked (GlcNAc...) asparagine" evidence="2">
    <location>
        <position position="84"/>
    </location>
</feature>
<feature type="glycosylation site" description="N-linked (GlcNAc...) asparagine" evidence="2">
    <location>
        <position position="87"/>
    </location>
</feature>
<feature type="splice variant" id="VSP_012002" description="In isoform A." evidence="7 8">
    <location>
        <begin position="427"/>
        <end position="443"/>
    </location>
</feature>
<feature type="sequence conflict" description="In Ref. 1; AAA28676, 2; AFJ23964/AFJ23965 and 5; AEQ62993." evidence="9" ref="1 2 5">
    <original>K</original>
    <variation>R</variation>
    <location>
        <position position="23"/>
    </location>
</feature>
<feature type="sequence conflict" description="In Ref. 2; AFJ23965." evidence="9" ref="2">
    <original>I</original>
    <variation>M</variation>
    <location>
        <position position="90"/>
    </location>
</feature>
<feature type="sequence conflict" description="In Ref. 6; AAA85449." evidence="9" ref="6">
    <original>A</original>
    <variation>T</variation>
    <location>
        <position position="155"/>
    </location>
</feature>
<feature type="sequence conflict" description="In Ref. 6; AAA85449." evidence="9" ref="6">
    <original>S</original>
    <variation>N</variation>
    <location>
        <position position="199"/>
    </location>
</feature>
<feature type="sequence conflict" description="In Ref. 6; AAA85449." evidence="9" ref="6">
    <original>R</original>
    <variation>G</variation>
    <location>
        <position position="216"/>
    </location>
</feature>
<feature type="sequence conflict" description="In Ref. 6; AAA85449." evidence="9" ref="6">
    <location>
        <position position="227"/>
    </location>
</feature>
<feature type="sequence conflict" description="In Ref. 2; AFJ23965." evidence="9" ref="2">
    <original>Q</original>
    <variation>H</variation>
    <location>
        <position position="306"/>
    </location>
</feature>
<feature type="sequence conflict" description="In Ref. 6; AAA85449." evidence="9" ref="6">
    <original>G</original>
    <variation>P</variation>
    <location>
        <position position="331"/>
    </location>
</feature>
<feature type="sequence conflict" description="In Ref. 1; AAA28676, 2; AFJ23964/AFJ23965 and 6; AAA85449." evidence="9" ref="1 2 6">
    <original>P</original>
    <variation>A</variation>
    <location>
        <position position="355"/>
    </location>
</feature>
<feature type="sequence conflict" description="In Ref. 1; AAA28676." evidence="9" ref="1">
    <original>G</original>
    <variation>A</variation>
    <location>
        <position position="462"/>
    </location>
</feature>
<feature type="sequence conflict" description="In Ref. 2; AFJ23964/AFJ23965 and 6; AAA85449." evidence="9" ref="2 6">
    <original>A</original>
    <variation>T</variation>
    <location>
        <position position="532"/>
    </location>
</feature>
<feature type="sequence conflict" description="In Ref. 6; AAA85449." evidence="9" ref="6">
    <original>VG</original>
    <variation>C</variation>
    <location>
        <begin position="687"/>
        <end position="688"/>
    </location>
</feature>
<feature type="sequence conflict" description="In Ref. 6; AAA85449." evidence="9" ref="6">
    <original>AR</original>
    <variation>P</variation>
    <location>
        <begin position="696"/>
        <end position="697"/>
    </location>
</feature>
<feature type="sequence conflict" description="In Ref. 6; AAA85449." evidence="9" ref="6">
    <original>VLI</original>
    <variation>CLS</variation>
    <location>
        <begin position="737"/>
        <end position="739"/>
    </location>
</feature>
<feature type="sequence conflict" description="In Ref. 6; AAA85449." evidence="9" ref="6">
    <original>C</original>
    <variation>S</variation>
    <location>
        <position position="771"/>
    </location>
</feature>
<feature type="sequence conflict" description="In Ref. 6; AAA85449." evidence="9" ref="6">
    <original>EGMVRGVYN</original>
    <variation>DFMYAASTIR</variation>
    <location>
        <begin position="797"/>
        <end position="805"/>
    </location>
</feature>
<dbReference type="EMBL" id="M23412">
    <property type="protein sequence ID" value="AAA28676.1"/>
    <property type="molecule type" value="mRNA"/>
</dbReference>
<dbReference type="EMBL" id="JQ922420">
    <property type="protein sequence ID" value="AFJ23964.1"/>
    <property type="molecule type" value="mRNA"/>
</dbReference>
<dbReference type="EMBL" id="JQ922421">
    <property type="protein sequence ID" value="AFJ23965.1"/>
    <property type="molecule type" value="mRNA"/>
</dbReference>
<dbReference type="EMBL" id="AE013599">
    <property type="protein sequence ID" value="AAF47197.1"/>
    <property type="molecule type" value="Genomic_DNA"/>
</dbReference>
<dbReference type="EMBL" id="AE013599">
    <property type="protein sequence ID" value="AAM68310.1"/>
    <property type="molecule type" value="Genomic_DNA"/>
</dbReference>
<dbReference type="EMBL" id="BT025816">
    <property type="protein sequence ID" value="ABF85716.1"/>
    <property type="status" value="ALT_SEQ"/>
    <property type="molecule type" value="mRNA"/>
</dbReference>
<dbReference type="EMBL" id="BT132689">
    <property type="protein sequence ID" value="AEQ62993.1"/>
    <property type="molecule type" value="mRNA"/>
</dbReference>
<dbReference type="EMBL" id="M27495">
    <property type="protein sequence ID" value="AAA85449.1"/>
    <property type="status" value="ALT_FRAME"/>
    <property type="molecule type" value="mRNA"/>
</dbReference>
<dbReference type="PIR" id="S05661">
    <property type="entry name" value="S05661"/>
</dbReference>
<dbReference type="RefSeq" id="NP_523844.2">
    <molecule id="P16395-1"/>
    <property type="nucleotide sequence ID" value="NM_079120.3"/>
</dbReference>
<dbReference type="RefSeq" id="NP_726440.1">
    <molecule id="P16395-2"/>
    <property type="nucleotide sequence ID" value="NM_166668.2"/>
</dbReference>
<dbReference type="SMR" id="P16395"/>
<dbReference type="FunCoup" id="P16395">
    <property type="interactions" value="200"/>
</dbReference>
<dbReference type="STRING" id="7227.FBpp0072275"/>
<dbReference type="BindingDB" id="P16395"/>
<dbReference type="ChEMBL" id="CHEMBL2366467"/>
<dbReference type="DrugCentral" id="P16395"/>
<dbReference type="GlyCosmos" id="P16395">
    <property type="glycosylation" value="3 sites, No reported glycans"/>
</dbReference>
<dbReference type="GlyGen" id="P16395">
    <property type="glycosylation" value="4 sites"/>
</dbReference>
<dbReference type="PaxDb" id="7227-FBpp0072275"/>
<dbReference type="EnsemblMetazoa" id="FBtr0072367">
    <molecule id="P16395-2"/>
    <property type="protein sequence ID" value="FBpp0072274"/>
    <property type="gene ID" value="FBgn0000037"/>
</dbReference>
<dbReference type="EnsemblMetazoa" id="FBtr0072368">
    <molecule id="P16395-1"/>
    <property type="protein sequence ID" value="FBpp0072275"/>
    <property type="gene ID" value="FBgn0000037"/>
</dbReference>
<dbReference type="GeneID" id="37892"/>
<dbReference type="KEGG" id="dme:Dmel_CG4356"/>
<dbReference type="AGR" id="FB:FBgn0000037"/>
<dbReference type="CTD" id="37892"/>
<dbReference type="FlyBase" id="FBgn0000037">
    <property type="gene designation" value="mAChR-A"/>
</dbReference>
<dbReference type="VEuPathDB" id="VectorBase:FBgn0000037"/>
<dbReference type="eggNOG" id="KOG4220">
    <property type="taxonomic scope" value="Eukaryota"/>
</dbReference>
<dbReference type="GeneTree" id="ENSGT00940000166540"/>
<dbReference type="InParanoid" id="P16395"/>
<dbReference type="OMA" id="IPVTLWH"/>
<dbReference type="OrthoDB" id="10071887at2759"/>
<dbReference type="PhylomeDB" id="P16395"/>
<dbReference type="Reactome" id="R-DME-390648">
    <property type="pathway name" value="Muscarinic acetylcholine receptors"/>
</dbReference>
<dbReference type="Reactome" id="R-DME-390650">
    <property type="pathway name" value="Histamine receptors"/>
</dbReference>
<dbReference type="Reactome" id="R-DME-416476">
    <property type="pathway name" value="G alpha (q) signalling events"/>
</dbReference>
<dbReference type="Reactome" id="R-DME-418594">
    <property type="pathway name" value="G alpha (i) signalling events"/>
</dbReference>
<dbReference type="Reactome" id="R-DME-8856825">
    <property type="pathway name" value="Cargo recognition for clathrin-mediated endocytosis"/>
</dbReference>
<dbReference type="Reactome" id="R-DME-8856828">
    <property type="pathway name" value="Clathrin-mediated endocytosis"/>
</dbReference>
<dbReference type="BioGRID-ORCS" id="37892">
    <property type="hits" value="0 hits in 3 CRISPR screens"/>
</dbReference>
<dbReference type="GenomeRNAi" id="37892"/>
<dbReference type="PRO" id="PR:P16395"/>
<dbReference type="Proteomes" id="UP000000803">
    <property type="component" value="Chromosome 2R"/>
</dbReference>
<dbReference type="Bgee" id="FBgn0000037">
    <property type="expression patterns" value="Expressed in lamina monopolar neuron L1 (Drosophila) in insect head and 148 other cell types or tissues"/>
</dbReference>
<dbReference type="GO" id="GO:0030425">
    <property type="term" value="C:dendrite"/>
    <property type="evidence" value="ECO:0000318"/>
    <property type="project" value="GO_Central"/>
</dbReference>
<dbReference type="GO" id="GO:0016020">
    <property type="term" value="C:membrane"/>
    <property type="evidence" value="ECO:0000250"/>
    <property type="project" value="FlyBase"/>
</dbReference>
<dbReference type="GO" id="GO:0005886">
    <property type="term" value="C:plasma membrane"/>
    <property type="evidence" value="ECO:0000314"/>
    <property type="project" value="FlyBase"/>
</dbReference>
<dbReference type="GO" id="GO:0045211">
    <property type="term" value="C:postsynaptic membrane"/>
    <property type="evidence" value="ECO:0007669"/>
    <property type="project" value="UniProtKB-SubCell"/>
</dbReference>
<dbReference type="GO" id="GO:0045202">
    <property type="term" value="C:synapse"/>
    <property type="evidence" value="ECO:0000318"/>
    <property type="project" value="GO_Central"/>
</dbReference>
<dbReference type="GO" id="GO:0016907">
    <property type="term" value="F:G protein-coupled acetylcholine receptor activity"/>
    <property type="evidence" value="ECO:0000314"/>
    <property type="project" value="FlyBase"/>
</dbReference>
<dbReference type="GO" id="GO:0008227">
    <property type="term" value="F:G protein-coupled amine receptor activity"/>
    <property type="evidence" value="ECO:0000250"/>
    <property type="project" value="FlyBase"/>
</dbReference>
<dbReference type="GO" id="GO:0007197">
    <property type="term" value="P:adenylate cyclase-inhibiting G protein-coupled acetylcholine receptor signaling pathway"/>
    <property type="evidence" value="ECO:0000318"/>
    <property type="project" value="GO_Central"/>
</dbReference>
<dbReference type="GO" id="GO:0007268">
    <property type="term" value="P:chemical synaptic transmission"/>
    <property type="evidence" value="ECO:0000318"/>
    <property type="project" value="GO_Central"/>
</dbReference>
<dbReference type="GO" id="GO:0007213">
    <property type="term" value="P:G protein-coupled acetylcholine receptor signaling pathway"/>
    <property type="evidence" value="ECO:0000314"/>
    <property type="project" value="FlyBase"/>
</dbReference>
<dbReference type="GO" id="GO:0007187">
    <property type="term" value="P:G protein-coupled receptor signaling pathway, coupled to cyclic nucleotide second messenger"/>
    <property type="evidence" value="ECO:0000318"/>
    <property type="project" value="GO_Central"/>
</dbReference>
<dbReference type="GO" id="GO:0007200">
    <property type="term" value="P:phospholipase C-activating G protein-coupled receptor signaling pathway"/>
    <property type="evidence" value="ECO:0000314"/>
    <property type="project" value="FlyBase"/>
</dbReference>
<dbReference type="CDD" id="cd15301">
    <property type="entry name" value="7tmA_mAChR_DM1-like"/>
    <property type="match status" value="1"/>
</dbReference>
<dbReference type="FunFam" id="1.20.1070.10:FF:000038">
    <property type="entry name" value="Muscarinic acetylcholine receptor"/>
    <property type="match status" value="1"/>
</dbReference>
<dbReference type="FunFam" id="1.20.1070.10:FF:000288">
    <property type="entry name" value="Muscarinic acetylcholine receptor"/>
    <property type="match status" value="1"/>
</dbReference>
<dbReference type="Gene3D" id="1.20.1070.10">
    <property type="entry name" value="Rhodopsin 7-helix transmembrane proteins"/>
    <property type="match status" value="2"/>
</dbReference>
<dbReference type="InterPro" id="IPR000276">
    <property type="entry name" value="GPCR_Rhodpsn"/>
</dbReference>
<dbReference type="InterPro" id="IPR017452">
    <property type="entry name" value="GPCR_Rhodpsn_7TM"/>
</dbReference>
<dbReference type="InterPro" id="IPR000995">
    <property type="entry name" value="Musac_Ach_rcpt"/>
</dbReference>
<dbReference type="PANTHER" id="PTHR24247">
    <property type="entry name" value="5-HYDROXYTRYPTAMINE RECEPTOR"/>
    <property type="match status" value="1"/>
</dbReference>
<dbReference type="PANTHER" id="PTHR24247:SF265">
    <property type="entry name" value="MUSCARINIC ACETYLCHOLINE RECEPTOR DM1"/>
    <property type="match status" value="1"/>
</dbReference>
<dbReference type="Pfam" id="PF00001">
    <property type="entry name" value="7tm_1"/>
    <property type="match status" value="2"/>
</dbReference>
<dbReference type="PRINTS" id="PR00237">
    <property type="entry name" value="GPCRRHODOPSN"/>
</dbReference>
<dbReference type="PRINTS" id="PR00243">
    <property type="entry name" value="MUSCARINICR"/>
</dbReference>
<dbReference type="SUPFAM" id="SSF81321">
    <property type="entry name" value="Family A G protein-coupled receptor-like"/>
    <property type="match status" value="2"/>
</dbReference>
<dbReference type="PROSITE" id="PS00237">
    <property type="entry name" value="G_PROTEIN_RECEP_F1_1"/>
    <property type="match status" value="1"/>
</dbReference>
<dbReference type="PROSITE" id="PS50262">
    <property type="entry name" value="G_PROTEIN_RECEP_F1_2"/>
    <property type="match status" value="1"/>
</dbReference>
<sequence>MEPVMSLALAAHGPPSILEPLFKTVTTSTTTTTTTTTSTTTTTASPAGYSPGYPGTTLLTALFENLTSTAASGLYDPYSGMYGNQTNGTIGFETKGPRYSLASMVVMGFVAAILSTVTVAGNVMVMISFKIDKQLQTISNYFLFSLAIADFAIGAISMPLFAVTTILGYWPLGPIVCDTWLALDYLASNASVLNLLIISFDRYFSVTRPLTYRAKRTTNRAAVMIGAAWGISLLLWPPWIYSWPYIEGKRTVPKDECYIQFIETNQYITFGTALAAFYFPVTIMCFLYWRIWRETKKRQKDLPNLQAGKKDSSKRSNSSDENTVVNHASGGLLAFAQVGGNDHDTWRRPRSESSPDAESVYMTNMVIDSGYHGMHSRKSSIKSTNTIKKSYTCFGSIKEWCIAWWHSGREDSDDFAYEQEEPSDLGYATPVTIETPLQSSVSRCTSMNVMRDNYSMGGSVSGVRPPSILLSDVSPTPLPRPPLASISQLQEMSAVTASTTANVNTSGNGNGAINNNNNASHNGNGAVNGNGAGNGSGIGLGTTGNATHRDSRTLPVINRINSRSVSQDSVYTILIRLPSDGASSNAANGGGGGPGAGAAASASLSMQGDCAPSIKMIHEDGPTTTAAAAPLASAAATRRPLPSRDSEFSLPLGRRMSHAQHDARLLNAKVIPKQLGKAGGGAAGGGVGGAHALMNARNAAKKKKKSQEKRQESKAAKTLSAILLSFIITWTPYNILVLIKPLTTCSDCIPTELWDFFYALCYINSTINPMCYALCNATFRRTYVRILTCKWHTRNREGMVRGVYN</sequence>
<gene>
    <name type="primary">mAChR-A</name>
    <name type="synonym">AcrC</name>
    <name type="synonym">mAcR-60C</name>
    <name type="ORF">CG4356</name>
</gene>